<sequence length="450" mass="51069">MFNNLTQRFLKIIKKISNKGRLTEKNIKETLREIRIALLEADVALPVVKNFIPSIQKSVIGNQVNKSLTPGQELIKIVKKELTLILGKENHSLNLSVTPPAIILMIGLQGSGKTTTTAKLGQLIRTKYKKKVIVTSIDIYRLAAIKQLKMLSKQAKISFFPSNNTQSPKDIVQHAIQHAKLKFYDVLLIDTAGRLQIDKKMMNELLDVYNISHPIETFFVADAMFGQDSINVINEFNKYLPVSSFIITKTDSDTRAGIILSIKYLTKKPIKFIGTGEKLEELELFYPDRIASRILGMGDMLSLIENIENKIDKKHIKKFSNTIKKYNTFNFNDMLLHINQIKKIGGVNSILGKLPKTQTIFNSFQNNIDENILLKMKTIINSMTISERHQPELIKGSRKRRISLGSGIPIPEINQLLKQFNNIKKIMKTIKKGGVTKIMQGINNIIKNKF</sequence>
<feature type="chain" id="PRO_0000101152" description="Signal recognition particle protein">
    <location>
        <begin position="1"/>
        <end position="450"/>
    </location>
</feature>
<feature type="binding site" evidence="1">
    <location>
        <begin position="107"/>
        <end position="114"/>
    </location>
    <ligand>
        <name>GTP</name>
        <dbReference type="ChEBI" id="CHEBI:37565"/>
    </ligand>
</feature>
<feature type="binding site" evidence="1">
    <location>
        <begin position="190"/>
        <end position="194"/>
    </location>
    <ligand>
        <name>GTP</name>
        <dbReference type="ChEBI" id="CHEBI:37565"/>
    </ligand>
</feature>
<feature type="binding site" evidence="1">
    <location>
        <begin position="248"/>
        <end position="251"/>
    </location>
    <ligand>
        <name>GTP</name>
        <dbReference type="ChEBI" id="CHEBI:37565"/>
    </ligand>
</feature>
<proteinExistence type="inferred from homology"/>
<keyword id="KW-0963">Cytoplasm</keyword>
<keyword id="KW-0342">GTP-binding</keyword>
<keyword id="KW-0378">Hydrolase</keyword>
<keyword id="KW-0547">Nucleotide-binding</keyword>
<keyword id="KW-1185">Reference proteome</keyword>
<keyword id="KW-0687">Ribonucleoprotein</keyword>
<keyword id="KW-0694">RNA-binding</keyword>
<keyword id="KW-0733">Signal recognition particle</keyword>
<gene>
    <name evidence="1" type="primary">ffh</name>
    <name type="ordered locus">bbp_356</name>
</gene>
<organism>
    <name type="scientific">Buchnera aphidicola subsp. Baizongia pistaciae (strain Bp)</name>
    <dbReference type="NCBI Taxonomy" id="224915"/>
    <lineage>
        <taxon>Bacteria</taxon>
        <taxon>Pseudomonadati</taxon>
        <taxon>Pseudomonadota</taxon>
        <taxon>Gammaproteobacteria</taxon>
        <taxon>Enterobacterales</taxon>
        <taxon>Erwiniaceae</taxon>
        <taxon>Buchnera</taxon>
    </lineage>
</organism>
<comment type="function">
    <text evidence="1">Involved in targeting and insertion of nascent membrane proteins into the cytoplasmic membrane. Binds to the hydrophobic signal sequence of the ribosome-nascent chain (RNC) as it emerges from the ribosomes. The SRP-RNC complex is then targeted to the cytoplasmic membrane where it interacts with the SRP receptor FtsY. Interaction with FtsY leads to the transfer of the RNC complex to the Sec translocase for insertion into the membrane, the hydrolysis of GTP by both Ffh and FtsY, and the dissociation of the SRP-FtsY complex into the individual components.</text>
</comment>
<comment type="catalytic activity">
    <reaction evidence="1">
        <text>GTP + H2O = GDP + phosphate + H(+)</text>
        <dbReference type="Rhea" id="RHEA:19669"/>
        <dbReference type="ChEBI" id="CHEBI:15377"/>
        <dbReference type="ChEBI" id="CHEBI:15378"/>
        <dbReference type="ChEBI" id="CHEBI:37565"/>
        <dbReference type="ChEBI" id="CHEBI:43474"/>
        <dbReference type="ChEBI" id="CHEBI:58189"/>
        <dbReference type="EC" id="3.6.5.4"/>
    </reaction>
</comment>
<comment type="subunit">
    <text evidence="1">Part of the signal recognition particle protein translocation system, which is composed of SRP and FtsY. SRP is a ribonucleoprotein composed of Ffh and a 4.5S RNA molecule.</text>
</comment>
<comment type="subcellular location">
    <subcellularLocation>
        <location evidence="1">Cytoplasm</location>
    </subcellularLocation>
    <text evidence="1">The SRP-RNC complex is targeted to the cytoplasmic membrane.</text>
</comment>
<comment type="domain">
    <text evidence="1">Composed of three domains: the N-terminal N domain, which is responsible for interactions with the ribosome, the central G domain, which binds GTP, and the C-terminal M domain, which binds the RNA and the signal sequence of the RNC.</text>
</comment>
<comment type="similarity">
    <text evidence="1">Belongs to the GTP-binding SRP family. SRP54 subfamily.</text>
</comment>
<name>SRP54_BUCBP</name>
<reference key="1">
    <citation type="journal article" date="2003" name="Proc. Natl. Acad. Sci. U.S.A.">
        <title>Reductive genome evolution in Buchnera aphidicola.</title>
        <authorList>
            <person name="van Ham R.C.H.J."/>
            <person name="Kamerbeek J."/>
            <person name="Palacios C."/>
            <person name="Rausell C."/>
            <person name="Abascal F."/>
            <person name="Bastolla U."/>
            <person name="Fernandez J.M."/>
            <person name="Jimenez L."/>
            <person name="Postigo M."/>
            <person name="Silva F.J."/>
            <person name="Tamames J."/>
            <person name="Viguera E."/>
            <person name="Latorre A."/>
            <person name="Valencia A."/>
            <person name="Moran F."/>
            <person name="Moya A."/>
        </authorList>
    </citation>
    <scope>NUCLEOTIDE SEQUENCE [LARGE SCALE GENOMIC DNA]</scope>
    <source>
        <strain>Bp</strain>
    </source>
</reference>
<accession>Q89AE4</accession>
<evidence type="ECO:0000255" key="1">
    <source>
        <dbReference type="HAMAP-Rule" id="MF_00306"/>
    </source>
</evidence>
<protein>
    <recommendedName>
        <fullName evidence="1">Signal recognition particle protein</fullName>
        <ecNumber evidence="1">3.6.5.4</ecNumber>
    </recommendedName>
    <alternativeName>
        <fullName evidence="1">Fifty-four homolog</fullName>
    </alternativeName>
</protein>
<dbReference type="EC" id="3.6.5.4" evidence="1"/>
<dbReference type="EMBL" id="AE016826">
    <property type="protein sequence ID" value="AAO27075.1"/>
    <property type="molecule type" value="Genomic_DNA"/>
</dbReference>
<dbReference type="RefSeq" id="WP_011091476.1">
    <property type="nucleotide sequence ID" value="NC_004545.1"/>
</dbReference>
<dbReference type="SMR" id="Q89AE4"/>
<dbReference type="STRING" id="224915.bbp_356"/>
<dbReference type="KEGG" id="bab:bbp_356"/>
<dbReference type="eggNOG" id="COG0541">
    <property type="taxonomic scope" value="Bacteria"/>
</dbReference>
<dbReference type="HOGENOM" id="CLU_009301_6_0_6"/>
<dbReference type="OrthoDB" id="9804720at2"/>
<dbReference type="Proteomes" id="UP000000601">
    <property type="component" value="Chromosome"/>
</dbReference>
<dbReference type="GO" id="GO:0048500">
    <property type="term" value="C:signal recognition particle"/>
    <property type="evidence" value="ECO:0007669"/>
    <property type="project" value="UniProtKB-UniRule"/>
</dbReference>
<dbReference type="GO" id="GO:0008312">
    <property type="term" value="F:7S RNA binding"/>
    <property type="evidence" value="ECO:0007669"/>
    <property type="project" value="InterPro"/>
</dbReference>
<dbReference type="GO" id="GO:0016887">
    <property type="term" value="F:ATP hydrolysis activity"/>
    <property type="evidence" value="ECO:0007669"/>
    <property type="project" value="InterPro"/>
</dbReference>
<dbReference type="GO" id="GO:0005525">
    <property type="term" value="F:GTP binding"/>
    <property type="evidence" value="ECO:0007669"/>
    <property type="project" value="UniProtKB-UniRule"/>
</dbReference>
<dbReference type="GO" id="GO:0003924">
    <property type="term" value="F:GTPase activity"/>
    <property type="evidence" value="ECO:0007669"/>
    <property type="project" value="UniProtKB-UniRule"/>
</dbReference>
<dbReference type="GO" id="GO:0006614">
    <property type="term" value="P:SRP-dependent cotranslational protein targeting to membrane"/>
    <property type="evidence" value="ECO:0007669"/>
    <property type="project" value="InterPro"/>
</dbReference>
<dbReference type="CDD" id="cd18539">
    <property type="entry name" value="SRP_G"/>
    <property type="match status" value="1"/>
</dbReference>
<dbReference type="Gene3D" id="3.40.50.300">
    <property type="entry name" value="P-loop containing nucleotide triphosphate hydrolases"/>
    <property type="match status" value="1"/>
</dbReference>
<dbReference type="Gene3D" id="1.20.120.140">
    <property type="entry name" value="Signal recognition particle SRP54, nucleotide-binding domain"/>
    <property type="match status" value="1"/>
</dbReference>
<dbReference type="Gene3D" id="1.10.260.30">
    <property type="entry name" value="Signal recognition particle, SRP54 subunit, M-domain"/>
    <property type="match status" value="1"/>
</dbReference>
<dbReference type="HAMAP" id="MF_00306">
    <property type="entry name" value="SRP54"/>
    <property type="match status" value="1"/>
</dbReference>
<dbReference type="InterPro" id="IPR003593">
    <property type="entry name" value="AAA+_ATPase"/>
</dbReference>
<dbReference type="InterPro" id="IPR027417">
    <property type="entry name" value="P-loop_NTPase"/>
</dbReference>
<dbReference type="InterPro" id="IPR036891">
    <property type="entry name" value="Signal_recog_part_SRP54_M_sf"/>
</dbReference>
<dbReference type="InterPro" id="IPR013822">
    <property type="entry name" value="Signal_recog_particl_SRP54_hlx"/>
</dbReference>
<dbReference type="InterPro" id="IPR004125">
    <property type="entry name" value="Signal_recog_particle_SRP54_M"/>
</dbReference>
<dbReference type="InterPro" id="IPR004780">
    <property type="entry name" value="SRP"/>
</dbReference>
<dbReference type="InterPro" id="IPR036225">
    <property type="entry name" value="SRP/SRP_N"/>
</dbReference>
<dbReference type="InterPro" id="IPR022941">
    <property type="entry name" value="SRP54"/>
</dbReference>
<dbReference type="InterPro" id="IPR000897">
    <property type="entry name" value="SRP54_GTPase_dom"/>
</dbReference>
<dbReference type="InterPro" id="IPR042101">
    <property type="entry name" value="SRP54_N_sf"/>
</dbReference>
<dbReference type="NCBIfam" id="TIGR00959">
    <property type="entry name" value="ffh"/>
    <property type="match status" value="1"/>
</dbReference>
<dbReference type="PANTHER" id="PTHR11564">
    <property type="entry name" value="SIGNAL RECOGNITION PARTICLE 54K PROTEIN SRP54"/>
    <property type="match status" value="1"/>
</dbReference>
<dbReference type="PANTHER" id="PTHR11564:SF5">
    <property type="entry name" value="SIGNAL RECOGNITION PARTICLE SUBUNIT SRP54"/>
    <property type="match status" value="1"/>
</dbReference>
<dbReference type="Pfam" id="PF00448">
    <property type="entry name" value="SRP54"/>
    <property type="match status" value="1"/>
</dbReference>
<dbReference type="Pfam" id="PF02881">
    <property type="entry name" value="SRP54_N"/>
    <property type="match status" value="1"/>
</dbReference>
<dbReference type="Pfam" id="PF02978">
    <property type="entry name" value="SRP_SPB"/>
    <property type="match status" value="1"/>
</dbReference>
<dbReference type="SMART" id="SM00382">
    <property type="entry name" value="AAA"/>
    <property type="match status" value="1"/>
</dbReference>
<dbReference type="SMART" id="SM00962">
    <property type="entry name" value="SRP54"/>
    <property type="match status" value="1"/>
</dbReference>
<dbReference type="SMART" id="SM00963">
    <property type="entry name" value="SRP54_N"/>
    <property type="match status" value="1"/>
</dbReference>
<dbReference type="SUPFAM" id="SSF47364">
    <property type="entry name" value="Domain of the SRP/SRP receptor G-proteins"/>
    <property type="match status" value="1"/>
</dbReference>
<dbReference type="SUPFAM" id="SSF52540">
    <property type="entry name" value="P-loop containing nucleoside triphosphate hydrolases"/>
    <property type="match status" value="1"/>
</dbReference>
<dbReference type="SUPFAM" id="SSF47446">
    <property type="entry name" value="Signal peptide-binding domain"/>
    <property type="match status" value="1"/>
</dbReference>
<dbReference type="PROSITE" id="PS00300">
    <property type="entry name" value="SRP54"/>
    <property type="match status" value="1"/>
</dbReference>